<evidence type="ECO:0000255" key="1">
    <source>
        <dbReference type="HAMAP-Rule" id="MF_00255"/>
    </source>
</evidence>
<dbReference type="EC" id="6.1.1.14" evidence="1"/>
<dbReference type="EMBL" id="AP010904">
    <property type="protein sequence ID" value="BAH75576.1"/>
    <property type="molecule type" value="Genomic_DNA"/>
</dbReference>
<dbReference type="RefSeq" id="WP_015860762.1">
    <property type="nucleotide sequence ID" value="NC_012796.1"/>
</dbReference>
<dbReference type="SMR" id="C4XS54"/>
<dbReference type="STRING" id="573370.DMR_20850"/>
<dbReference type="KEGG" id="dma:DMR_20850"/>
<dbReference type="eggNOG" id="COG0751">
    <property type="taxonomic scope" value="Bacteria"/>
</dbReference>
<dbReference type="HOGENOM" id="CLU_007220_2_2_7"/>
<dbReference type="OrthoDB" id="9775440at2"/>
<dbReference type="Proteomes" id="UP000009071">
    <property type="component" value="Chromosome"/>
</dbReference>
<dbReference type="GO" id="GO:0005829">
    <property type="term" value="C:cytosol"/>
    <property type="evidence" value="ECO:0007669"/>
    <property type="project" value="TreeGrafter"/>
</dbReference>
<dbReference type="GO" id="GO:0004814">
    <property type="term" value="F:arginine-tRNA ligase activity"/>
    <property type="evidence" value="ECO:0007669"/>
    <property type="project" value="InterPro"/>
</dbReference>
<dbReference type="GO" id="GO:0005524">
    <property type="term" value="F:ATP binding"/>
    <property type="evidence" value="ECO:0007669"/>
    <property type="project" value="UniProtKB-UniRule"/>
</dbReference>
<dbReference type="GO" id="GO:0004820">
    <property type="term" value="F:glycine-tRNA ligase activity"/>
    <property type="evidence" value="ECO:0007669"/>
    <property type="project" value="UniProtKB-UniRule"/>
</dbReference>
<dbReference type="GO" id="GO:0006420">
    <property type="term" value="P:arginyl-tRNA aminoacylation"/>
    <property type="evidence" value="ECO:0007669"/>
    <property type="project" value="InterPro"/>
</dbReference>
<dbReference type="GO" id="GO:0006426">
    <property type="term" value="P:glycyl-tRNA aminoacylation"/>
    <property type="evidence" value="ECO:0007669"/>
    <property type="project" value="UniProtKB-UniRule"/>
</dbReference>
<dbReference type="HAMAP" id="MF_00255">
    <property type="entry name" value="Gly_tRNA_synth_beta"/>
    <property type="match status" value="1"/>
</dbReference>
<dbReference type="InterPro" id="IPR008909">
    <property type="entry name" value="DALR_anticod-bd"/>
</dbReference>
<dbReference type="InterPro" id="IPR015944">
    <property type="entry name" value="Gly-tRNA-synth_bsu"/>
</dbReference>
<dbReference type="InterPro" id="IPR006194">
    <property type="entry name" value="Gly-tRNA-synth_heterodimer"/>
</dbReference>
<dbReference type="NCBIfam" id="TIGR00211">
    <property type="entry name" value="glyS"/>
    <property type="match status" value="1"/>
</dbReference>
<dbReference type="PANTHER" id="PTHR30075:SF2">
    <property type="entry name" value="GLYCINE--TRNA LIGASE, CHLOROPLASTIC_MITOCHONDRIAL 2"/>
    <property type="match status" value="1"/>
</dbReference>
<dbReference type="PANTHER" id="PTHR30075">
    <property type="entry name" value="GLYCYL-TRNA SYNTHETASE"/>
    <property type="match status" value="1"/>
</dbReference>
<dbReference type="Pfam" id="PF05746">
    <property type="entry name" value="DALR_1"/>
    <property type="match status" value="1"/>
</dbReference>
<dbReference type="Pfam" id="PF02092">
    <property type="entry name" value="tRNA_synt_2f"/>
    <property type="match status" value="1"/>
</dbReference>
<dbReference type="PRINTS" id="PR01045">
    <property type="entry name" value="TRNASYNTHGB"/>
</dbReference>
<dbReference type="SUPFAM" id="SSF109604">
    <property type="entry name" value="HD-domain/PDEase-like"/>
    <property type="match status" value="1"/>
</dbReference>
<dbReference type="PROSITE" id="PS50861">
    <property type="entry name" value="AA_TRNA_LIGASE_II_GLYAB"/>
    <property type="match status" value="1"/>
</dbReference>
<protein>
    <recommendedName>
        <fullName evidence="1">Glycine--tRNA ligase beta subunit</fullName>
        <ecNumber evidence="1">6.1.1.14</ecNumber>
    </recommendedName>
    <alternativeName>
        <fullName evidence="1">Glycyl-tRNA synthetase beta subunit</fullName>
        <shortName evidence="1">GlyRS</shortName>
    </alternativeName>
</protein>
<name>SYGB_SOLM1</name>
<accession>C4XS54</accession>
<keyword id="KW-0030">Aminoacyl-tRNA synthetase</keyword>
<keyword id="KW-0067">ATP-binding</keyword>
<keyword id="KW-0963">Cytoplasm</keyword>
<keyword id="KW-0436">Ligase</keyword>
<keyword id="KW-0547">Nucleotide-binding</keyword>
<keyword id="KW-0648">Protein biosynthesis</keyword>
<gene>
    <name evidence="1" type="primary">glyS</name>
    <name type="ordered locus">DMR_20850</name>
</gene>
<proteinExistence type="inferred from homology"/>
<comment type="catalytic activity">
    <reaction evidence="1">
        <text>tRNA(Gly) + glycine + ATP = glycyl-tRNA(Gly) + AMP + diphosphate</text>
        <dbReference type="Rhea" id="RHEA:16013"/>
        <dbReference type="Rhea" id="RHEA-COMP:9664"/>
        <dbReference type="Rhea" id="RHEA-COMP:9683"/>
        <dbReference type="ChEBI" id="CHEBI:30616"/>
        <dbReference type="ChEBI" id="CHEBI:33019"/>
        <dbReference type="ChEBI" id="CHEBI:57305"/>
        <dbReference type="ChEBI" id="CHEBI:78442"/>
        <dbReference type="ChEBI" id="CHEBI:78522"/>
        <dbReference type="ChEBI" id="CHEBI:456215"/>
        <dbReference type="EC" id="6.1.1.14"/>
    </reaction>
</comment>
<comment type="subunit">
    <text evidence="1">Tetramer of two alpha and two beta subunits.</text>
</comment>
<comment type="subcellular location">
    <subcellularLocation>
        <location evidence="1">Cytoplasm</location>
    </subcellularLocation>
</comment>
<comment type="similarity">
    <text evidence="1">Belongs to the class-II aminoacyl-tRNA synthetase family.</text>
</comment>
<feature type="chain" id="PRO_1000204602" description="Glycine--tRNA ligase beta subunit">
    <location>
        <begin position="1"/>
        <end position="697"/>
    </location>
</feature>
<organism>
    <name type="scientific">Solidesulfovibrio magneticus (strain ATCC 700980 / DSM 13731 / RS-1)</name>
    <name type="common">Desulfovibrio magneticus</name>
    <dbReference type="NCBI Taxonomy" id="573370"/>
    <lineage>
        <taxon>Bacteria</taxon>
        <taxon>Pseudomonadati</taxon>
        <taxon>Thermodesulfobacteriota</taxon>
        <taxon>Desulfovibrionia</taxon>
        <taxon>Desulfovibrionales</taxon>
        <taxon>Desulfovibrionaceae</taxon>
        <taxon>Solidesulfovibrio</taxon>
    </lineage>
</organism>
<sequence>MSHFLFEIGFEEMPARFLPGLVDEVKKLFAEGLTQAKVDCGTIAAFATPRRLVVSVPDLAAAARREEEVVSGPPEKVGFDAAGAPTKAAEGFAKGQGLDVSAVFVMDTPKGRYLALRKTTGGEAAIELLPALCLEAVKKLSFPKRMRWGSREFAFGRPVHWFLALLDDAVVPFQFDDITSGRATYGQRIMGPGPFEVPTAAAYFDIIRDKGKVVLDAREREGIVRSQAEALAKEAGGTAVINPALLAEVTGLTEHPVVLLGRFDPKFLDVPREVLITSMESHQKSFAVEDGKGGLLPVFLTTLGLVPGNVELVRRGWQRVLTARLEDARFFWEADLSASLETWQKKLENVVFLAGLGSMRDKGKRLERLCGLIAEQAGKPEIMLEASQAGGLAKVDLVSDMVGEFAELQGIMGGIYSRRKGQSKTASRAVAEQYLPAGPDSPVPATLAGAILSIADKADTLAGCFGLDMAPTGAADPYALRRAALGICRVVIEHGLRLDLMELLQGAIDGYGEVKFKVDRTHVLAKLLDFFGQRLKAYFTGQGYDTLVVEAALGASYTDIAALSARLSALAGFAAKPDFDQAVLTFKRAANIIRKQGVGAGVPLTGAVKAALLEEQAEKDLAAVCQDVFPRFDALFDAGDYGAVLELLYELRPSVDAFFDNVMVMCDDMDMRLNRLNLLKSLVDRLGRVADFAALQV</sequence>
<reference key="1">
    <citation type="journal article" date="2009" name="Genome Res.">
        <title>Whole genome sequence of Desulfovibrio magneticus strain RS-1 revealed common gene clusters in magnetotactic bacteria.</title>
        <authorList>
            <person name="Nakazawa H."/>
            <person name="Arakaki A."/>
            <person name="Narita-Yamada S."/>
            <person name="Yashiro I."/>
            <person name="Jinno K."/>
            <person name="Aoki N."/>
            <person name="Tsuruyama A."/>
            <person name="Okamura Y."/>
            <person name="Tanikawa S."/>
            <person name="Fujita N."/>
            <person name="Takeyama H."/>
            <person name="Matsunaga T."/>
        </authorList>
    </citation>
    <scope>NUCLEOTIDE SEQUENCE [LARGE SCALE GENOMIC DNA]</scope>
    <source>
        <strain>ATCC 700980 / DSM 13731 / RS-1</strain>
    </source>
</reference>